<dbReference type="EC" id="2.3.1.-" evidence="1"/>
<dbReference type="EMBL" id="AK010391">
    <property type="protein sequence ID" value="BAB26905.1"/>
    <property type="status" value="ALT_SEQ"/>
    <property type="molecule type" value="mRNA"/>
</dbReference>
<dbReference type="EMBL" id="AK050845">
    <property type="protein sequence ID" value="BAC34431.1"/>
    <property type="molecule type" value="mRNA"/>
</dbReference>
<dbReference type="EMBL" id="AK144685">
    <property type="protein sequence ID" value="BAE26012.1"/>
    <property type="molecule type" value="mRNA"/>
</dbReference>
<dbReference type="EMBL" id="BC033303">
    <property type="protein sequence ID" value="AAH33303.2"/>
    <property type="molecule type" value="mRNA"/>
</dbReference>
<dbReference type="EMBL" id="BC071275">
    <property type="protein sequence ID" value="AAH71275.1"/>
    <property type="molecule type" value="mRNA"/>
</dbReference>
<dbReference type="CCDS" id="CCDS27216.1"/>
<dbReference type="RefSeq" id="NP_082315.3">
    <property type="nucleotide sequence ID" value="NM_028039.2"/>
</dbReference>
<dbReference type="PDB" id="6SP0">
    <property type="method" value="X-ray"/>
    <property type="resolution" value="1.77 A"/>
    <property type="chains" value="A=368-592"/>
</dbReference>
<dbReference type="PDBsum" id="6SP0"/>
<dbReference type="SMR" id="Q8CIB9"/>
<dbReference type="FunCoup" id="Q8CIB9">
    <property type="interactions" value="848"/>
</dbReference>
<dbReference type="STRING" id="10090.ENSMUSP00000022613"/>
<dbReference type="iPTMnet" id="Q8CIB9"/>
<dbReference type="PhosphoSitePlus" id="Q8CIB9"/>
<dbReference type="jPOST" id="Q8CIB9"/>
<dbReference type="PaxDb" id="10090-ENSMUSP00000022613"/>
<dbReference type="PeptideAtlas" id="Q8CIB9"/>
<dbReference type="ProteomicsDB" id="275648"/>
<dbReference type="Antibodypedia" id="23057">
    <property type="antibodies" value="77 antibodies from 16 providers"/>
</dbReference>
<dbReference type="DNASU" id="71988"/>
<dbReference type="Ensembl" id="ENSMUST00000022613.10">
    <property type="protein sequence ID" value="ENSMUSP00000022613.10"/>
    <property type="gene ID" value="ENSMUSG00000022034.11"/>
</dbReference>
<dbReference type="GeneID" id="71988"/>
<dbReference type="KEGG" id="mmu:71988"/>
<dbReference type="UCSC" id="uc007ujp.2">
    <property type="organism name" value="mouse"/>
</dbReference>
<dbReference type="AGR" id="MGI:1919238"/>
<dbReference type="CTD" id="157570"/>
<dbReference type="MGI" id="MGI:1919238">
    <property type="gene designation" value="Esco2"/>
</dbReference>
<dbReference type="VEuPathDB" id="HostDB:ENSMUSG00000022034"/>
<dbReference type="eggNOG" id="KOG3014">
    <property type="taxonomic scope" value="Eukaryota"/>
</dbReference>
<dbReference type="GeneTree" id="ENSGT00940000158598"/>
<dbReference type="HOGENOM" id="CLU_031546_1_0_1"/>
<dbReference type="InParanoid" id="Q8CIB9"/>
<dbReference type="OMA" id="FGTTVCK"/>
<dbReference type="OrthoDB" id="428854at2759"/>
<dbReference type="PhylomeDB" id="Q8CIB9"/>
<dbReference type="TreeFam" id="TF314027"/>
<dbReference type="Reactome" id="R-MMU-2468052">
    <property type="pathway name" value="Establishment of Sister Chromatid Cohesion"/>
</dbReference>
<dbReference type="BioGRID-ORCS" id="71988">
    <property type="hits" value="41 hits in 118 CRISPR screens"/>
</dbReference>
<dbReference type="ChiTaRS" id="Esco2">
    <property type="organism name" value="mouse"/>
</dbReference>
<dbReference type="PRO" id="PR:Q8CIB9"/>
<dbReference type="Proteomes" id="UP000000589">
    <property type="component" value="Chromosome 14"/>
</dbReference>
<dbReference type="RNAct" id="Q8CIB9">
    <property type="molecule type" value="protein"/>
</dbReference>
<dbReference type="Bgee" id="ENSMUSG00000022034">
    <property type="expression patterns" value="Expressed in animal zygote and 169 other cell types or tissues"/>
</dbReference>
<dbReference type="ExpressionAtlas" id="Q8CIB9">
    <property type="expression patterns" value="baseline and differential"/>
</dbReference>
<dbReference type="GO" id="GO:0030054">
    <property type="term" value="C:cell junction"/>
    <property type="evidence" value="ECO:0007669"/>
    <property type="project" value="Ensembl"/>
</dbReference>
<dbReference type="GO" id="GO:0000785">
    <property type="term" value="C:chromatin"/>
    <property type="evidence" value="ECO:0000250"/>
    <property type="project" value="UniProtKB"/>
</dbReference>
<dbReference type="GO" id="GO:0010369">
    <property type="term" value="C:chromocenter"/>
    <property type="evidence" value="ECO:0000314"/>
    <property type="project" value="MGI"/>
</dbReference>
<dbReference type="GO" id="GO:0005794">
    <property type="term" value="C:Golgi apparatus"/>
    <property type="evidence" value="ECO:0007669"/>
    <property type="project" value="Ensembl"/>
</dbReference>
<dbReference type="GO" id="GO:0005654">
    <property type="term" value="C:nucleoplasm"/>
    <property type="evidence" value="ECO:0007669"/>
    <property type="project" value="Ensembl"/>
</dbReference>
<dbReference type="GO" id="GO:0005721">
    <property type="term" value="C:pericentric heterochromatin"/>
    <property type="evidence" value="ECO:0000314"/>
    <property type="project" value="MGI"/>
</dbReference>
<dbReference type="GO" id="GO:0035861">
    <property type="term" value="C:site of double-strand break"/>
    <property type="evidence" value="ECO:0000314"/>
    <property type="project" value="MGI"/>
</dbReference>
<dbReference type="GO" id="GO:0001741">
    <property type="term" value="C:XY body"/>
    <property type="evidence" value="ECO:0000314"/>
    <property type="project" value="MGI"/>
</dbReference>
<dbReference type="GO" id="GO:0016407">
    <property type="term" value="F:acetyltransferase activity"/>
    <property type="evidence" value="ECO:0000250"/>
    <property type="project" value="UniProtKB"/>
</dbReference>
<dbReference type="GO" id="GO:0004468">
    <property type="term" value="F:L-lysine N-acetyltransferase activity, acting on acetyl phosphate as donor"/>
    <property type="evidence" value="ECO:0000315"/>
    <property type="project" value="MGI"/>
</dbReference>
<dbReference type="GO" id="GO:0061733">
    <property type="term" value="F:protein-lysine-acetyltransferase activity"/>
    <property type="evidence" value="ECO:0007669"/>
    <property type="project" value="RHEA"/>
</dbReference>
<dbReference type="GO" id="GO:0008270">
    <property type="term" value="F:zinc ion binding"/>
    <property type="evidence" value="ECO:0007669"/>
    <property type="project" value="UniProtKB-KW"/>
</dbReference>
<dbReference type="GO" id="GO:0007059">
    <property type="term" value="P:chromosome segregation"/>
    <property type="evidence" value="ECO:0000315"/>
    <property type="project" value="MGI"/>
</dbReference>
<dbReference type="GO" id="GO:0006302">
    <property type="term" value="P:double-strand break repair"/>
    <property type="evidence" value="ECO:0000315"/>
    <property type="project" value="MGI"/>
</dbReference>
<dbReference type="GO" id="GO:0002244">
    <property type="term" value="P:hematopoietic progenitor cell differentiation"/>
    <property type="evidence" value="ECO:0000316"/>
    <property type="project" value="MGI"/>
</dbReference>
<dbReference type="GO" id="GO:0071168">
    <property type="term" value="P:protein localization to chromatin"/>
    <property type="evidence" value="ECO:0000315"/>
    <property type="project" value="MGI"/>
</dbReference>
<dbReference type="GO" id="GO:0006275">
    <property type="term" value="P:regulation of DNA replication"/>
    <property type="evidence" value="ECO:0000250"/>
    <property type="project" value="UniProtKB"/>
</dbReference>
<dbReference type="InterPro" id="IPR028005">
    <property type="entry name" value="AcTrfase_ESCO_Znf_dom"/>
</dbReference>
<dbReference type="InterPro" id="IPR028009">
    <property type="entry name" value="ESCO_Acetyltransf_dom"/>
</dbReference>
<dbReference type="PANTHER" id="PTHR45884">
    <property type="entry name" value="N-ACETYLTRANSFERASE ECO"/>
    <property type="match status" value="1"/>
</dbReference>
<dbReference type="PANTHER" id="PTHR45884:SF3">
    <property type="entry name" value="N-ACETYLTRANSFERASE ESCO2"/>
    <property type="match status" value="1"/>
</dbReference>
<dbReference type="Pfam" id="PF13880">
    <property type="entry name" value="Acetyltransf_13"/>
    <property type="match status" value="1"/>
</dbReference>
<dbReference type="Pfam" id="PF13878">
    <property type="entry name" value="zf-C2H2_3"/>
    <property type="match status" value="1"/>
</dbReference>
<protein>
    <recommendedName>
        <fullName>N-acetyltransferase ESCO2</fullName>
        <ecNumber evidence="1">2.3.1.-</ecNumber>
    </recommendedName>
    <alternativeName>
        <fullName>Establishment of cohesion 1 homolog 2</fullName>
        <shortName>ECO1 homolog 2</shortName>
    </alternativeName>
</protein>
<accession>Q8CIB9</accession>
<accession>Q3UMT6</accession>
<accession>Q6IQX5</accession>
<accession>Q8BNG9</accession>
<accession>Q8BQF8</accession>
<accession>Q9CRI8</accession>
<reference key="1">
    <citation type="journal article" date="2005" name="Science">
        <title>The transcriptional landscape of the mammalian genome.</title>
        <authorList>
            <person name="Carninci P."/>
            <person name="Kasukawa T."/>
            <person name="Katayama S."/>
            <person name="Gough J."/>
            <person name="Frith M.C."/>
            <person name="Maeda N."/>
            <person name="Oyama R."/>
            <person name="Ravasi T."/>
            <person name="Lenhard B."/>
            <person name="Wells C."/>
            <person name="Kodzius R."/>
            <person name="Shimokawa K."/>
            <person name="Bajic V.B."/>
            <person name="Brenner S.E."/>
            <person name="Batalov S."/>
            <person name="Forrest A.R."/>
            <person name="Zavolan M."/>
            <person name="Davis M.J."/>
            <person name="Wilming L.G."/>
            <person name="Aidinis V."/>
            <person name="Allen J.E."/>
            <person name="Ambesi-Impiombato A."/>
            <person name="Apweiler R."/>
            <person name="Aturaliya R.N."/>
            <person name="Bailey T.L."/>
            <person name="Bansal M."/>
            <person name="Baxter L."/>
            <person name="Beisel K.W."/>
            <person name="Bersano T."/>
            <person name="Bono H."/>
            <person name="Chalk A.M."/>
            <person name="Chiu K.P."/>
            <person name="Choudhary V."/>
            <person name="Christoffels A."/>
            <person name="Clutterbuck D.R."/>
            <person name="Crowe M.L."/>
            <person name="Dalla E."/>
            <person name="Dalrymple B.P."/>
            <person name="de Bono B."/>
            <person name="Della Gatta G."/>
            <person name="di Bernardo D."/>
            <person name="Down T."/>
            <person name="Engstrom P."/>
            <person name="Fagiolini M."/>
            <person name="Faulkner G."/>
            <person name="Fletcher C.F."/>
            <person name="Fukushima T."/>
            <person name="Furuno M."/>
            <person name="Futaki S."/>
            <person name="Gariboldi M."/>
            <person name="Georgii-Hemming P."/>
            <person name="Gingeras T.R."/>
            <person name="Gojobori T."/>
            <person name="Green R.E."/>
            <person name="Gustincich S."/>
            <person name="Harbers M."/>
            <person name="Hayashi Y."/>
            <person name="Hensch T.K."/>
            <person name="Hirokawa N."/>
            <person name="Hill D."/>
            <person name="Huminiecki L."/>
            <person name="Iacono M."/>
            <person name="Ikeo K."/>
            <person name="Iwama A."/>
            <person name="Ishikawa T."/>
            <person name="Jakt M."/>
            <person name="Kanapin A."/>
            <person name="Katoh M."/>
            <person name="Kawasawa Y."/>
            <person name="Kelso J."/>
            <person name="Kitamura H."/>
            <person name="Kitano H."/>
            <person name="Kollias G."/>
            <person name="Krishnan S.P."/>
            <person name="Kruger A."/>
            <person name="Kummerfeld S.K."/>
            <person name="Kurochkin I.V."/>
            <person name="Lareau L.F."/>
            <person name="Lazarevic D."/>
            <person name="Lipovich L."/>
            <person name="Liu J."/>
            <person name="Liuni S."/>
            <person name="McWilliam S."/>
            <person name="Madan Babu M."/>
            <person name="Madera M."/>
            <person name="Marchionni L."/>
            <person name="Matsuda H."/>
            <person name="Matsuzawa S."/>
            <person name="Miki H."/>
            <person name="Mignone F."/>
            <person name="Miyake S."/>
            <person name="Morris K."/>
            <person name="Mottagui-Tabar S."/>
            <person name="Mulder N."/>
            <person name="Nakano N."/>
            <person name="Nakauchi H."/>
            <person name="Ng P."/>
            <person name="Nilsson R."/>
            <person name="Nishiguchi S."/>
            <person name="Nishikawa S."/>
            <person name="Nori F."/>
            <person name="Ohara O."/>
            <person name="Okazaki Y."/>
            <person name="Orlando V."/>
            <person name="Pang K.C."/>
            <person name="Pavan W.J."/>
            <person name="Pavesi G."/>
            <person name="Pesole G."/>
            <person name="Petrovsky N."/>
            <person name="Piazza S."/>
            <person name="Reed J."/>
            <person name="Reid J.F."/>
            <person name="Ring B.Z."/>
            <person name="Ringwald M."/>
            <person name="Rost B."/>
            <person name="Ruan Y."/>
            <person name="Salzberg S.L."/>
            <person name="Sandelin A."/>
            <person name="Schneider C."/>
            <person name="Schoenbach C."/>
            <person name="Sekiguchi K."/>
            <person name="Semple C.A."/>
            <person name="Seno S."/>
            <person name="Sessa L."/>
            <person name="Sheng Y."/>
            <person name="Shibata Y."/>
            <person name="Shimada H."/>
            <person name="Shimada K."/>
            <person name="Silva D."/>
            <person name="Sinclair B."/>
            <person name="Sperling S."/>
            <person name="Stupka E."/>
            <person name="Sugiura K."/>
            <person name="Sultana R."/>
            <person name="Takenaka Y."/>
            <person name="Taki K."/>
            <person name="Tammoja K."/>
            <person name="Tan S.L."/>
            <person name="Tang S."/>
            <person name="Taylor M.S."/>
            <person name="Tegner J."/>
            <person name="Teichmann S.A."/>
            <person name="Ueda H.R."/>
            <person name="van Nimwegen E."/>
            <person name="Verardo R."/>
            <person name="Wei C.L."/>
            <person name="Yagi K."/>
            <person name="Yamanishi H."/>
            <person name="Zabarovsky E."/>
            <person name="Zhu S."/>
            <person name="Zimmer A."/>
            <person name="Hide W."/>
            <person name="Bult C."/>
            <person name="Grimmond S.M."/>
            <person name="Teasdale R.D."/>
            <person name="Liu E.T."/>
            <person name="Brusic V."/>
            <person name="Quackenbush J."/>
            <person name="Wahlestedt C."/>
            <person name="Mattick J.S."/>
            <person name="Hume D.A."/>
            <person name="Kai C."/>
            <person name="Sasaki D."/>
            <person name="Tomaru Y."/>
            <person name="Fukuda S."/>
            <person name="Kanamori-Katayama M."/>
            <person name="Suzuki M."/>
            <person name="Aoki J."/>
            <person name="Arakawa T."/>
            <person name="Iida J."/>
            <person name="Imamura K."/>
            <person name="Itoh M."/>
            <person name="Kato T."/>
            <person name="Kawaji H."/>
            <person name="Kawagashira N."/>
            <person name="Kawashima T."/>
            <person name="Kojima M."/>
            <person name="Kondo S."/>
            <person name="Konno H."/>
            <person name="Nakano K."/>
            <person name="Ninomiya N."/>
            <person name="Nishio T."/>
            <person name="Okada M."/>
            <person name="Plessy C."/>
            <person name="Shibata K."/>
            <person name="Shiraki T."/>
            <person name="Suzuki S."/>
            <person name="Tagami M."/>
            <person name="Waki K."/>
            <person name="Watahiki A."/>
            <person name="Okamura-Oho Y."/>
            <person name="Suzuki H."/>
            <person name="Kawai J."/>
            <person name="Hayashizaki Y."/>
        </authorList>
    </citation>
    <scope>NUCLEOTIDE SEQUENCE [LARGE SCALE MRNA]</scope>
    <source>
        <strain>C57BL/6J</strain>
        <tissue>Embryo</tissue>
        <tissue>Lung</tissue>
    </source>
</reference>
<reference key="2">
    <citation type="journal article" date="2004" name="Genome Res.">
        <title>The status, quality, and expansion of the NIH full-length cDNA project: the Mammalian Gene Collection (MGC).</title>
        <authorList>
            <consortium name="The MGC Project Team"/>
        </authorList>
    </citation>
    <scope>NUCLEOTIDE SEQUENCE [LARGE SCALE MRNA]</scope>
    <source>
        <strain>Czech II</strain>
        <tissue>Embryo</tissue>
        <tissue>Mammary tumor</tissue>
    </source>
</reference>
<reference key="3">
    <citation type="journal article" date="2021" name="Eur. J. Orthod.">
        <title>Juberg-Hayward syndrome is a cohesinopathy, caused by mutation in ESCO2.</title>
        <authorList>
            <person name="Kantaputra P.N."/>
            <person name="Dejkhamron P."/>
            <person name="Intachai W."/>
            <person name="Ngamphiw C."/>
            <person name="Kawasaki K."/>
            <person name="Ohazama A."/>
            <person name="Krisanaprakornkit S."/>
            <person name="Olsen B."/>
            <person name="Tongsima S."/>
            <person name="Ketudat Cairns J.R."/>
        </authorList>
    </citation>
    <scope>DEVELOPMENTAL STAGE</scope>
</reference>
<sequence length="592" mass="67273">MMATCTPRKRKRYTLNADNDDSLLTDISSSKLRCAENLFPSPNKKHNYQSSVQKEDKSCSHQLHFPSSPLKTTENSRFSFANHSSLFKPAMSTVSFYSKEKYYLNPLERKLIRECRSICLATESGDKPIPSVTENIQRKPVCTKKNKKKQKSLTAKYQPNYKHIKSKSRNLKNSKPNQVTYKPVVDQENSCFPAKNYPNSPPRVLSQKIKPQVTLQGGAAFFVRKRNSLKKLPLEDKPLLLQKNLPEVPEGAPEAKQIPKSLLVDEKSSVKVQNARSKNEEKLRKNPSGAVVSSKECNLDKHDFPSENSLDENKTISPESVYPIFNVSSVNTKRPEEQSSVGSTACTNFLKQTNVPKNINSRDTNKGGKDQLVIDAGQKHFGTTVCKSCGMIYTASNPEDEIQHLQHHHRFLEGIKFVGWKRERVVAEFWDGKIVLVLPRDPSYAIKKVEDVQELVDLELGFQQTVPVCPDKTKTFLFIDEKRVVGCLIAEPIKQAFRVLSEPSASKECSRAWRCSDVPEPAICGISRIWVFRLKRRKRIARRLVDTVRNCFMFGCFLSTNEIAFSDPTPDGKLFATKYCNTPNFLVYNFHN</sequence>
<feature type="chain" id="PRO_0000074543" description="N-acetyltransferase ESCO2">
    <location>
        <begin position="1"/>
        <end position="592"/>
    </location>
</feature>
<feature type="zinc finger region" description="CCHH-type">
    <location>
        <begin position="384"/>
        <end position="408"/>
    </location>
</feature>
<feature type="region of interest" description="Disordered" evidence="2">
    <location>
        <begin position="267"/>
        <end position="294"/>
    </location>
</feature>
<feature type="modified residue" description="Phosphoserine" evidence="1">
    <location>
        <position position="41"/>
    </location>
</feature>
<feature type="modified residue" description="Phosphoserine" evidence="1">
    <location>
        <position position="85"/>
    </location>
</feature>
<feature type="modified residue" description="Phosphoserine" evidence="1">
    <location>
        <position position="309"/>
    </location>
</feature>
<feature type="sequence conflict" description="In Ref. 2; AAH33303." evidence="4" ref="2">
    <original>KE</original>
    <variation>RK</variation>
    <location>
        <begin position="54"/>
        <end position="55"/>
    </location>
</feature>
<feature type="sequence conflict" description="In Ref. 1; BAB26905." evidence="4" ref="1">
    <original>K</original>
    <variation>E</variation>
    <location>
        <position position="494"/>
    </location>
</feature>
<feature type="sequence conflict" description="In Ref. 1; BAB26905." evidence="4" ref="1">
    <original>F</original>
    <variation>Y</variation>
    <location>
        <position position="585"/>
    </location>
</feature>
<feature type="turn" evidence="5">
    <location>
        <begin position="387"/>
        <end position="389"/>
    </location>
</feature>
<feature type="helix" evidence="5">
    <location>
        <begin position="398"/>
        <end position="415"/>
    </location>
</feature>
<feature type="strand" evidence="5">
    <location>
        <begin position="425"/>
        <end position="429"/>
    </location>
</feature>
<feature type="strand" evidence="5">
    <location>
        <begin position="432"/>
        <end position="437"/>
    </location>
</feature>
<feature type="helix" evidence="5">
    <location>
        <begin position="443"/>
        <end position="460"/>
    </location>
</feature>
<feature type="strand" evidence="5">
    <location>
        <begin position="474"/>
        <end position="480"/>
    </location>
</feature>
<feature type="strand" evidence="5">
    <location>
        <begin position="483"/>
        <end position="492"/>
    </location>
</feature>
<feature type="strand" evidence="5">
    <location>
        <begin position="494"/>
        <end position="499"/>
    </location>
</feature>
<feature type="strand" evidence="5">
    <location>
        <begin position="515"/>
        <end position="521"/>
    </location>
</feature>
<feature type="strand" evidence="5">
    <location>
        <begin position="523"/>
        <end position="531"/>
    </location>
</feature>
<feature type="helix" evidence="5">
    <location>
        <begin position="533"/>
        <end position="535"/>
    </location>
</feature>
<feature type="strand" evidence="5">
    <location>
        <begin position="537"/>
        <end position="539"/>
    </location>
</feature>
<feature type="helix" evidence="5">
    <location>
        <begin position="540"/>
        <end position="551"/>
    </location>
</feature>
<feature type="turn" evidence="5">
    <location>
        <begin position="552"/>
        <end position="555"/>
    </location>
</feature>
<feature type="strand" evidence="5">
    <location>
        <begin position="562"/>
        <end position="567"/>
    </location>
</feature>
<feature type="helix" evidence="5">
    <location>
        <begin position="570"/>
        <end position="580"/>
    </location>
</feature>
<feature type="strand" evidence="5">
    <location>
        <begin position="582"/>
        <end position="584"/>
    </location>
</feature>
<feature type="strand" evidence="5">
    <location>
        <begin position="586"/>
        <end position="588"/>
    </location>
</feature>
<evidence type="ECO:0000250" key="1">
    <source>
        <dbReference type="UniProtKB" id="Q56NI9"/>
    </source>
</evidence>
<evidence type="ECO:0000256" key="2">
    <source>
        <dbReference type="SAM" id="MobiDB-lite"/>
    </source>
</evidence>
<evidence type="ECO:0000269" key="3">
    <source>
    </source>
</evidence>
<evidence type="ECO:0000305" key="4"/>
<evidence type="ECO:0007829" key="5">
    <source>
        <dbReference type="PDB" id="6SP0"/>
    </source>
</evidence>
<name>ESCO2_MOUSE</name>
<gene>
    <name type="primary">Esco2</name>
</gene>
<proteinExistence type="evidence at protein level"/>
<keyword id="KW-0002">3D-structure</keyword>
<keyword id="KW-0012">Acyltransferase</keyword>
<keyword id="KW-0131">Cell cycle</keyword>
<keyword id="KW-0158">Chromosome</keyword>
<keyword id="KW-0479">Metal-binding</keyword>
<keyword id="KW-0539">Nucleus</keyword>
<keyword id="KW-0597">Phosphoprotein</keyword>
<keyword id="KW-1185">Reference proteome</keyword>
<keyword id="KW-0808">Transferase</keyword>
<keyword id="KW-0862">Zinc</keyword>
<keyword id="KW-0863">Zinc-finger</keyword>
<organism>
    <name type="scientific">Mus musculus</name>
    <name type="common">Mouse</name>
    <dbReference type="NCBI Taxonomy" id="10090"/>
    <lineage>
        <taxon>Eukaryota</taxon>
        <taxon>Metazoa</taxon>
        <taxon>Chordata</taxon>
        <taxon>Craniata</taxon>
        <taxon>Vertebrata</taxon>
        <taxon>Euteleostomi</taxon>
        <taxon>Mammalia</taxon>
        <taxon>Eutheria</taxon>
        <taxon>Euarchontoglires</taxon>
        <taxon>Glires</taxon>
        <taxon>Rodentia</taxon>
        <taxon>Myomorpha</taxon>
        <taxon>Muroidea</taxon>
        <taxon>Muridae</taxon>
        <taxon>Murinae</taxon>
        <taxon>Mus</taxon>
        <taxon>Mus</taxon>
    </lineage>
</organism>
<comment type="function">
    <text evidence="1">Acetyltransferase required for the establishment of sister chromatid cohesion. Couples the processes of cohesion and DNA replication to ensure that only sister chromatids become paired together. In contrast to the structural cohesins, the deposition and establishment factors are required only during the S phase. Acetylates the cohesin component SMC3.</text>
</comment>
<comment type="catalytic activity">
    <reaction evidence="1">
        <text>L-lysyl-[protein] + acetyl-CoA = N(6)-acetyl-L-lysyl-[protein] + CoA + H(+)</text>
        <dbReference type="Rhea" id="RHEA:45948"/>
        <dbReference type="Rhea" id="RHEA-COMP:9752"/>
        <dbReference type="Rhea" id="RHEA-COMP:10731"/>
        <dbReference type="ChEBI" id="CHEBI:15378"/>
        <dbReference type="ChEBI" id="CHEBI:29969"/>
        <dbReference type="ChEBI" id="CHEBI:57287"/>
        <dbReference type="ChEBI" id="CHEBI:57288"/>
        <dbReference type="ChEBI" id="CHEBI:61930"/>
    </reaction>
</comment>
<comment type="subcellular location">
    <subcellularLocation>
        <location evidence="1">Nucleus</location>
    </subcellularLocation>
    <subcellularLocation>
        <location evidence="1">Chromosome</location>
    </subcellularLocation>
    <text evidence="1">Nuclear in interphase cells, excluded from chromosomes during metaphase but reassociates with chromosomes in telophase.</text>
</comment>
<comment type="developmental stage">
    <text evidence="3">At 14.5 dpc the expression is detected in developing murine lip, eyelid, palate, digit, tongue and hair follicles. Its expression is also observed in the long bones of the developing forelimb but not the hindlimb.</text>
</comment>
<comment type="domain">
    <text evidence="1">The N-terminal region seems to be responsible for association with chromosomes, thus excluding any involvement of the Zn finger in this process.</text>
</comment>
<comment type="similarity">
    <text evidence="4">Belongs to the acetyltransferase family. ECO subfamily.</text>
</comment>
<comment type="sequence caution" evidence="4">
    <conflict type="erroneous termination">
        <sequence resource="EMBL-CDS" id="BAB26905"/>
    </conflict>
    <text>Truncated C-terminus.</text>
</comment>